<feature type="chain" id="PRO_1000062151" description="Phosphopentomutase">
    <location>
        <begin position="1"/>
        <end position="397"/>
    </location>
</feature>
<feature type="binding site" evidence="1">
    <location>
        <position position="12"/>
    </location>
    <ligand>
        <name>Mn(2+)</name>
        <dbReference type="ChEBI" id="CHEBI:29035"/>
        <label>1</label>
    </ligand>
</feature>
<feature type="binding site" evidence="1">
    <location>
        <position position="289"/>
    </location>
    <ligand>
        <name>Mn(2+)</name>
        <dbReference type="ChEBI" id="CHEBI:29035"/>
        <label>2</label>
    </ligand>
</feature>
<feature type="binding site" evidence="1">
    <location>
        <position position="294"/>
    </location>
    <ligand>
        <name>Mn(2+)</name>
        <dbReference type="ChEBI" id="CHEBI:29035"/>
        <label>2</label>
    </ligand>
</feature>
<feature type="binding site" evidence="1">
    <location>
        <position position="330"/>
    </location>
    <ligand>
        <name>Mn(2+)</name>
        <dbReference type="ChEBI" id="CHEBI:29035"/>
        <label>1</label>
    </ligand>
</feature>
<feature type="binding site" evidence="1">
    <location>
        <position position="331"/>
    </location>
    <ligand>
        <name>Mn(2+)</name>
        <dbReference type="ChEBI" id="CHEBI:29035"/>
        <label>1</label>
    </ligand>
</feature>
<feature type="binding site" evidence="1">
    <location>
        <position position="342"/>
    </location>
    <ligand>
        <name>Mn(2+)</name>
        <dbReference type="ChEBI" id="CHEBI:29035"/>
        <label>2</label>
    </ligand>
</feature>
<keyword id="KW-0963">Cytoplasm</keyword>
<keyword id="KW-0413">Isomerase</keyword>
<keyword id="KW-0464">Manganese</keyword>
<keyword id="KW-0479">Metal-binding</keyword>
<keyword id="KW-1185">Reference proteome</keyword>
<sequence length="397" mass="44003">MSYKRVFVIVMDSVGTGAAHDAAKFDDVGSDTLGHVGEYYKGALKLPNLGKLGISNLRDTPIEGVPVADPAIGDYGKMEEISAGKDSMDGHWEMMGLPVMKPLSTFPNGFPQEIVDKLEKFSGRKVIVNKPYSGTEVIHDYGERQMETGELILYTSGDSVMQIAAHEDVIPVEELYKICEYARTLVNGPEYTVGRIIARPYVGPDKDHFTRTANRHDFSLKPIGETDMDRLRAAGYDVIGVGKINDIFSGEGIDKGYHNESNMDGMDHVDEVMKQDFTGFCFTNLVDFDAMYGHRRNPKGFGQALMDFDKRLGNVLDEMKPDDLLMITADHGNDPGFKGTDHTRENVPLLVYSPSMNKPNQSLGVRKTFSDLGATILENFNVEPVKGTSFYKEISND</sequence>
<accession>A5VHR0</accession>
<dbReference type="EC" id="5.4.2.7" evidence="1"/>
<dbReference type="EMBL" id="CP000705">
    <property type="protein sequence ID" value="ABQ82384.1"/>
    <property type="molecule type" value="Genomic_DNA"/>
</dbReference>
<dbReference type="RefSeq" id="WP_003669679.1">
    <property type="nucleotide sequence ID" value="NC_009513.1"/>
</dbReference>
<dbReference type="SMR" id="A5VHR0"/>
<dbReference type="STRING" id="557436.Lreu_0112"/>
<dbReference type="GeneID" id="77190318"/>
<dbReference type="KEGG" id="lre:Lreu_0112"/>
<dbReference type="PATRIC" id="fig|557436.17.peg.287"/>
<dbReference type="eggNOG" id="COG1015">
    <property type="taxonomic scope" value="Bacteria"/>
</dbReference>
<dbReference type="HOGENOM" id="CLU_053861_0_0_9"/>
<dbReference type="UniPathway" id="UPA00002">
    <property type="reaction ID" value="UER00467"/>
</dbReference>
<dbReference type="Proteomes" id="UP000001991">
    <property type="component" value="Chromosome"/>
</dbReference>
<dbReference type="GO" id="GO:0005829">
    <property type="term" value="C:cytosol"/>
    <property type="evidence" value="ECO:0007669"/>
    <property type="project" value="TreeGrafter"/>
</dbReference>
<dbReference type="GO" id="GO:0000287">
    <property type="term" value="F:magnesium ion binding"/>
    <property type="evidence" value="ECO:0007669"/>
    <property type="project" value="InterPro"/>
</dbReference>
<dbReference type="GO" id="GO:0030145">
    <property type="term" value="F:manganese ion binding"/>
    <property type="evidence" value="ECO:0007669"/>
    <property type="project" value="UniProtKB-UniRule"/>
</dbReference>
<dbReference type="GO" id="GO:0008973">
    <property type="term" value="F:phosphopentomutase activity"/>
    <property type="evidence" value="ECO:0007669"/>
    <property type="project" value="UniProtKB-UniRule"/>
</dbReference>
<dbReference type="GO" id="GO:0006018">
    <property type="term" value="P:2-deoxyribose 1-phosphate catabolic process"/>
    <property type="evidence" value="ECO:0007669"/>
    <property type="project" value="UniProtKB-UniRule"/>
</dbReference>
<dbReference type="GO" id="GO:0006015">
    <property type="term" value="P:5-phosphoribose 1-diphosphate biosynthetic process"/>
    <property type="evidence" value="ECO:0007669"/>
    <property type="project" value="UniProtKB-UniPathway"/>
</dbReference>
<dbReference type="GO" id="GO:0043094">
    <property type="term" value="P:metabolic compound salvage"/>
    <property type="evidence" value="ECO:0007669"/>
    <property type="project" value="InterPro"/>
</dbReference>
<dbReference type="GO" id="GO:0009117">
    <property type="term" value="P:nucleotide metabolic process"/>
    <property type="evidence" value="ECO:0007669"/>
    <property type="project" value="InterPro"/>
</dbReference>
<dbReference type="CDD" id="cd16009">
    <property type="entry name" value="PPM"/>
    <property type="match status" value="1"/>
</dbReference>
<dbReference type="FunFam" id="3.30.70.1250:FF:000001">
    <property type="entry name" value="Phosphopentomutase"/>
    <property type="match status" value="1"/>
</dbReference>
<dbReference type="Gene3D" id="3.40.720.10">
    <property type="entry name" value="Alkaline Phosphatase, subunit A"/>
    <property type="match status" value="1"/>
</dbReference>
<dbReference type="Gene3D" id="3.30.70.1250">
    <property type="entry name" value="Phosphopentomutase"/>
    <property type="match status" value="1"/>
</dbReference>
<dbReference type="HAMAP" id="MF_00740">
    <property type="entry name" value="Phosphopentomut"/>
    <property type="match status" value="1"/>
</dbReference>
<dbReference type="InterPro" id="IPR017850">
    <property type="entry name" value="Alkaline_phosphatase_core_sf"/>
</dbReference>
<dbReference type="InterPro" id="IPR010045">
    <property type="entry name" value="DeoB"/>
</dbReference>
<dbReference type="InterPro" id="IPR006124">
    <property type="entry name" value="Metalloenzyme"/>
</dbReference>
<dbReference type="InterPro" id="IPR024052">
    <property type="entry name" value="Phosphopentomutase_DeoB_cap_sf"/>
</dbReference>
<dbReference type="NCBIfam" id="TIGR01696">
    <property type="entry name" value="deoB"/>
    <property type="match status" value="1"/>
</dbReference>
<dbReference type="NCBIfam" id="NF003766">
    <property type="entry name" value="PRK05362.1"/>
    <property type="match status" value="1"/>
</dbReference>
<dbReference type="PANTHER" id="PTHR21110">
    <property type="entry name" value="PHOSPHOPENTOMUTASE"/>
    <property type="match status" value="1"/>
</dbReference>
<dbReference type="PANTHER" id="PTHR21110:SF0">
    <property type="entry name" value="PHOSPHOPENTOMUTASE"/>
    <property type="match status" value="1"/>
</dbReference>
<dbReference type="Pfam" id="PF01676">
    <property type="entry name" value="Metalloenzyme"/>
    <property type="match status" value="1"/>
</dbReference>
<dbReference type="PIRSF" id="PIRSF001491">
    <property type="entry name" value="Ppentomutase"/>
    <property type="match status" value="1"/>
</dbReference>
<dbReference type="SUPFAM" id="SSF53649">
    <property type="entry name" value="Alkaline phosphatase-like"/>
    <property type="match status" value="1"/>
</dbReference>
<dbReference type="SUPFAM" id="SSF143856">
    <property type="entry name" value="DeoB insert domain-like"/>
    <property type="match status" value="1"/>
</dbReference>
<proteinExistence type="inferred from homology"/>
<name>DEOB_LIMRD</name>
<protein>
    <recommendedName>
        <fullName evidence="1">Phosphopentomutase</fullName>
        <ecNumber evidence="1">5.4.2.7</ecNumber>
    </recommendedName>
    <alternativeName>
        <fullName evidence="1">Phosphodeoxyribomutase</fullName>
    </alternativeName>
</protein>
<organism>
    <name type="scientific">Limosilactobacillus reuteri (strain DSM 20016)</name>
    <name type="common">Lactobacillus reuteri</name>
    <dbReference type="NCBI Taxonomy" id="557436"/>
    <lineage>
        <taxon>Bacteria</taxon>
        <taxon>Bacillati</taxon>
        <taxon>Bacillota</taxon>
        <taxon>Bacilli</taxon>
        <taxon>Lactobacillales</taxon>
        <taxon>Lactobacillaceae</taxon>
        <taxon>Limosilactobacillus</taxon>
    </lineage>
</organism>
<comment type="function">
    <text evidence="1">Isomerase that catalyzes the conversion of deoxy-ribose 1-phosphate (dRib-1-P) and ribose 1-phosphate (Rib-1-P) to deoxy-ribose 5-phosphate (dRib-5-P) and ribose 5-phosphate (Rib-5-P), respectively.</text>
</comment>
<comment type="catalytic activity">
    <reaction evidence="1">
        <text>2-deoxy-alpha-D-ribose 1-phosphate = 2-deoxy-D-ribose 5-phosphate</text>
        <dbReference type="Rhea" id="RHEA:27658"/>
        <dbReference type="ChEBI" id="CHEBI:57259"/>
        <dbReference type="ChEBI" id="CHEBI:62877"/>
        <dbReference type="EC" id="5.4.2.7"/>
    </reaction>
</comment>
<comment type="catalytic activity">
    <reaction evidence="1">
        <text>alpha-D-ribose 1-phosphate = D-ribose 5-phosphate</text>
        <dbReference type="Rhea" id="RHEA:18793"/>
        <dbReference type="ChEBI" id="CHEBI:57720"/>
        <dbReference type="ChEBI" id="CHEBI:78346"/>
        <dbReference type="EC" id="5.4.2.7"/>
    </reaction>
</comment>
<comment type="cofactor">
    <cofactor evidence="1">
        <name>Mn(2+)</name>
        <dbReference type="ChEBI" id="CHEBI:29035"/>
    </cofactor>
    <text evidence="1">Binds 2 manganese ions.</text>
</comment>
<comment type="pathway">
    <text evidence="1">Carbohydrate degradation; 2-deoxy-D-ribose 1-phosphate degradation; D-glyceraldehyde 3-phosphate and acetaldehyde from 2-deoxy-alpha-D-ribose 1-phosphate: step 1/2.</text>
</comment>
<comment type="subcellular location">
    <subcellularLocation>
        <location evidence="1">Cytoplasm</location>
    </subcellularLocation>
</comment>
<comment type="similarity">
    <text evidence="1">Belongs to the phosphopentomutase family.</text>
</comment>
<evidence type="ECO:0000255" key="1">
    <source>
        <dbReference type="HAMAP-Rule" id="MF_00740"/>
    </source>
</evidence>
<reference key="1">
    <citation type="journal article" date="2011" name="PLoS Genet.">
        <title>The evolution of host specialization in the vertebrate gut symbiont Lactobacillus reuteri.</title>
        <authorList>
            <person name="Frese S.A."/>
            <person name="Benson A.K."/>
            <person name="Tannock G.W."/>
            <person name="Loach D.M."/>
            <person name="Kim J."/>
            <person name="Zhang M."/>
            <person name="Oh P.L."/>
            <person name="Heng N.C."/>
            <person name="Patil P.B."/>
            <person name="Juge N."/>
            <person name="Mackenzie D.A."/>
            <person name="Pearson B.M."/>
            <person name="Lapidus A."/>
            <person name="Dalin E."/>
            <person name="Tice H."/>
            <person name="Goltsman E."/>
            <person name="Land M."/>
            <person name="Hauser L."/>
            <person name="Ivanova N."/>
            <person name="Kyrpides N.C."/>
            <person name="Walter J."/>
        </authorList>
    </citation>
    <scope>NUCLEOTIDE SEQUENCE [LARGE SCALE GENOMIC DNA]</scope>
    <source>
        <strain>DSM 20016</strain>
    </source>
</reference>
<gene>
    <name evidence="1" type="primary">deoB</name>
    <name type="ordered locus">Lreu_0112</name>
</gene>